<name>YJBD_ECOLI</name>
<protein>
    <recommendedName>
        <fullName>Uncharacterized protein YjbD</fullName>
    </recommendedName>
</protein>
<keyword id="KW-1185">Reference proteome</keyword>
<dbReference type="EMBL" id="U00006">
    <property type="protein sequence ID" value="AAC43117.1"/>
    <property type="molecule type" value="Genomic_DNA"/>
</dbReference>
<dbReference type="EMBL" id="U00096">
    <property type="protein sequence ID" value="AAC76993.1"/>
    <property type="molecule type" value="Genomic_DNA"/>
</dbReference>
<dbReference type="EMBL" id="AP009048">
    <property type="protein sequence ID" value="BAE78025.1"/>
    <property type="molecule type" value="Genomic_DNA"/>
</dbReference>
<dbReference type="PIR" id="F65209">
    <property type="entry name" value="F65209"/>
</dbReference>
<dbReference type="RefSeq" id="NP_418447.1">
    <property type="nucleotide sequence ID" value="NC_000913.3"/>
</dbReference>
<dbReference type="RefSeq" id="WP_001207634.1">
    <property type="nucleotide sequence ID" value="NZ_SSZK01000049.1"/>
</dbReference>
<dbReference type="SMR" id="P32685"/>
<dbReference type="BioGRID" id="4261956">
    <property type="interactions" value="8"/>
</dbReference>
<dbReference type="BioGRID" id="852812">
    <property type="interactions" value="1"/>
</dbReference>
<dbReference type="FunCoup" id="P32685">
    <property type="interactions" value="41"/>
</dbReference>
<dbReference type="IntAct" id="P32685">
    <property type="interactions" value="6"/>
</dbReference>
<dbReference type="STRING" id="511145.b4023"/>
<dbReference type="jPOST" id="P32685"/>
<dbReference type="PaxDb" id="511145-b4023"/>
<dbReference type="EnsemblBacteria" id="AAC76993">
    <property type="protein sequence ID" value="AAC76993"/>
    <property type="gene ID" value="b4023"/>
</dbReference>
<dbReference type="GeneID" id="948518"/>
<dbReference type="KEGG" id="ecj:JW3983"/>
<dbReference type="KEGG" id="eco:b4023"/>
<dbReference type="KEGG" id="ecoc:C3026_21730"/>
<dbReference type="PATRIC" id="fig|511145.12.peg.4136"/>
<dbReference type="EchoBASE" id="EB1866"/>
<dbReference type="eggNOG" id="ENOG5031VVV">
    <property type="taxonomic scope" value="Bacteria"/>
</dbReference>
<dbReference type="HOGENOM" id="CLU_166878_1_0_6"/>
<dbReference type="InParanoid" id="P32685"/>
<dbReference type="OMA" id="AYKPDAE"/>
<dbReference type="OrthoDB" id="6480942at2"/>
<dbReference type="PhylomeDB" id="P32685"/>
<dbReference type="BioCyc" id="EcoCyc:EG11922-MONOMER"/>
<dbReference type="PRO" id="PR:P32685"/>
<dbReference type="Proteomes" id="UP000000625">
    <property type="component" value="Chromosome"/>
</dbReference>
<dbReference type="InterPro" id="IPR020317">
    <property type="entry name" value="Uncharacterised_YjbD"/>
</dbReference>
<dbReference type="NCBIfam" id="NF007808">
    <property type="entry name" value="PRK10515.1"/>
    <property type="match status" value="1"/>
</dbReference>
<dbReference type="Pfam" id="PF11656">
    <property type="entry name" value="DUF3811"/>
    <property type="match status" value="1"/>
</dbReference>
<accession>P32685</accession>
<accession>Q2M6T1</accession>
<feature type="chain" id="PRO_0000169710" description="Uncharacterized protein YjbD">
    <location>
        <begin position="1"/>
        <end position="90"/>
    </location>
</feature>
<feature type="region of interest" description="Disordered" evidence="1">
    <location>
        <begin position="62"/>
        <end position="90"/>
    </location>
</feature>
<feature type="compositionally biased region" description="Polar residues" evidence="1">
    <location>
        <begin position="78"/>
        <end position="90"/>
    </location>
</feature>
<evidence type="ECO:0000256" key="1">
    <source>
        <dbReference type="SAM" id="MobiDB-lite"/>
    </source>
</evidence>
<proteinExistence type="predicted"/>
<organism>
    <name type="scientific">Escherichia coli (strain K12)</name>
    <dbReference type="NCBI Taxonomy" id="83333"/>
    <lineage>
        <taxon>Bacteria</taxon>
        <taxon>Pseudomonadati</taxon>
        <taxon>Pseudomonadota</taxon>
        <taxon>Gammaproteobacteria</taxon>
        <taxon>Enterobacterales</taxon>
        <taxon>Enterobacteriaceae</taxon>
        <taxon>Escherichia</taxon>
    </lineage>
</organism>
<reference key="1">
    <citation type="journal article" date="1993" name="Nucleic Acids Res.">
        <title>Analysis of the Escherichia coli genome. IV. DNA sequence of the region from 89.2 to 92.8 minutes.</title>
        <authorList>
            <person name="Blattner F.R."/>
            <person name="Burland V.D."/>
            <person name="Plunkett G. III"/>
            <person name="Sofia H.J."/>
            <person name="Daniels D.L."/>
        </authorList>
    </citation>
    <scope>NUCLEOTIDE SEQUENCE [LARGE SCALE GENOMIC DNA]</scope>
    <source>
        <strain>K12 / MG1655 / ATCC 47076</strain>
    </source>
</reference>
<reference key="2">
    <citation type="journal article" date="1997" name="Science">
        <title>The complete genome sequence of Escherichia coli K-12.</title>
        <authorList>
            <person name="Blattner F.R."/>
            <person name="Plunkett G. III"/>
            <person name="Bloch C.A."/>
            <person name="Perna N.T."/>
            <person name="Burland V."/>
            <person name="Riley M."/>
            <person name="Collado-Vides J."/>
            <person name="Glasner J.D."/>
            <person name="Rode C.K."/>
            <person name="Mayhew G.F."/>
            <person name="Gregor J."/>
            <person name="Davis N.W."/>
            <person name="Kirkpatrick H.A."/>
            <person name="Goeden M.A."/>
            <person name="Rose D.J."/>
            <person name="Mau B."/>
            <person name="Shao Y."/>
        </authorList>
    </citation>
    <scope>NUCLEOTIDE SEQUENCE [LARGE SCALE GENOMIC DNA]</scope>
    <source>
        <strain>K12 / MG1655 / ATCC 47076</strain>
    </source>
</reference>
<reference key="3">
    <citation type="journal article" date="2006" name="Mol. Syst. Biol.">
        <title>Highly accurate genome sequences of Escherichia coli K-12 strains MG1655 and W3110.</title>
        <authorList>
            <person name="Hayashi K."/>
            <person name="Morooka N."/>
            <person name="Yamamoto Y."/>
            <person name="Fujita K."/>
            <person name="Isono K."/>
            <person name="Choi S."/>
            <person name="Ohtsubo E."/>
            <person name="Baba T."/>
            <person name="Wanner B.L."/>
            <person name="Mori H."/>
            <person name="Horiuchi T."/>
        </authorList>
    </citation>
    <scope>NUCLEOTIDE SEQUENCE [LARGE SCALE GENOMIC DNA]</scope>
    <source>
        <strain>K12 / W3110 / ATCC 27325 / DSM 5911</strain>
    </source>
</reference>
<gene>
    <name type="primary">yjbD</name>
    <name type="ordered locus">b4023</name>
    <name type="ordered locus">JW3983</name>
</gene>
<sequence length="90" mass="10532">MALPRITQKEMTEREQRELKTLLDRARIAHGRVLTNSETNSIKKDYIDKLMVEREAEAKKARQLKKKQAYKPDPEASFSWSANTSTRGRR</sequence>